<sequence>MKIKTRFAPSPTGYLHVGGARTALYSWLFARHHGGEFVLRIEDTDLERSTPEAIEAIMDGMNWLNLEWDEGPYFQTKRFDRYNAVIDEMLEAGTAYKCYCSKERLEQLREDQMAKGEKPRYDGRCRHSHEHHADDEPCVVRFANPQDGSVIFDDQIRGPIEFSNQELDDLIIRRTDGSPTYNFCVVVDDWDMEITHVIRGEDHINNTPRQINILKALNAPVPMYAHVSMINGDDGKKLSKRHGAVSVMQYRDDGYLPEALLNYLVRLGWSSGDQEIFTREEMIKLFSLGAVSKSASAFNTDKLLWLNHHYINTLAPEYVATHLQWHIEQENIDTRNGPQLAELVKLLGERCKTLKEMSQSCRYFYEDFSEFDADAAKKHLRPVARQPLEVVRDKLSAITDWSAENVHHAIQATADELEVGMGKVGMPLRVAVTGAGQSPALDVTVHAIGKTRSIERINKALGFIAERESQQ</sequence>
<dbReference type="EC" id="6.1.1.17" evidence="1"/>
<dbReference type="EMBL" id="FM200053">
    <property type="protein sequence ID" value="CAR58539.1"/>
    <property type="molecule type" value="Genomic_DNA"/>
</dbReference>
<dbReference type="RefSeq" id="WP_000695625.1">
    <property type="nucleotide sequence ID" value="NC_011147.1"/>
</dbReference>
<dbReference type="SMR" id="B5BB76"/>
<dbReference type="KEGG" id="sek:SSPA0415"/>
<dbReference type="HOGENOM" id="CLU_015768_6_0_6"/>
<dbReference type="Proteomes" id="UP000001869">
    <property type="component" value="Chromosome"/>
</dbReference>
<dbReference type="GO" id="GO:0005829">
    <property type="term" value="C:cytosol"/>
    <property type="evidence" value="ECO:0007669"/>
    <property type="project" value="TreeGrafter"/>
</dbReference>
<dbReference type="GO" id="GO:0005524">
    <property type="term" value="F:ATP binding"/>
    <property type="evidence" value="ECO:0007669"/>
    <property type="project" value="UniProtKB-UniRule"/>
</dbReference>
<dbReference type="GO" id="GO:0004818">
    <property type="term" value="F:glutamate-tRNA ligase activity"/>
    <property type="evidence" value="ECO:0007669"/>
    <property type="project" value="UniProtKB-UniRule"/>
</dbReference>
<dbReference type="GO" id="GO:0000049">
    <property type="term" value="F:tRNA binding"/>
    <property type="evidence" value="ECO:0007669"/>
    <property type="project" value="InterPro"/>
</dbReference>
<dbReference type="GO" id="GO:0008270">
    <property type="term" value="F:zinc ion binding"/>
    <property type="evidence" value="ECO:0007669"/>
    <property type="project" value="UniProtKB-UniRule"/>
</dbReference>
<dbReference type="GO" id="GO:0006424">
    <property type="term" value="P:glutamyl-tRNA aminoacylation"/>
    <property type="evidence" value="ECO:0007669"/>
    <property type="project" value="UniProtKB-UniRule"/>
</dbReference>
<dbReference type="CDD" id="cd00808">
    <property type="entry name" value="GluRS_core"/>
    <property type="match status" value="1"/>
</dbReference>
<dbReference type="FunFam" id="1.10.10.350:FF:000001">
    <property type="entry name" value="Glutamate--tRNA ligase"/>
    <property type="match status" value="1"/>
</dbReference>
<dbReference type="FunFam" id="3.40.50.620:FF:000007">
    <property type="entry name" value="Glutamate--tRNA ligase"/>
    <property type="match status" value="1"/>
</dbReference>
<dbReference type="Gene3D" id="1.10.10.350">
    <property type="match status" value="1"/>
</dbReference>
<dbReference type="Gene3D" id="3.40.50.620">
    <property type="entry name" value="HUPs"/>
    <property type="match status" value="1"/>
</dbReference>
<dbReference type="HAMAP" id="MF_00022">
    <property type="entry name" value="Glu_tRNA_synth_type1"/>
    <property type="match status" value="1"/>
</dbReference>
<dbReference type="InterPro" id="IPR045462">
    <property type="entry name" value="aa-tRNA-synth_I_cd-bd"/>
</dbReference>
<dbReference type="InterPro" id="IPR020751">
    <property type="entry name" value="aa-tRNA-synth_I_codon-bd_sub2"/>
</dbReference>
<dbReference type="InterPro" id="IPR001412">
    <property type="entry name" value="aa-tRNA-synth_I_CS"/>
</dbReference>
<dbReference type="InterPro" id="IPR008925">
    <property type="entry name" value="aa_tRNA-synth_I_cd-bd_sf"/>
</dbReference>
<dbReference type="InterPro" id="IPR004527">
    <property type="entry name" value="Glu-tRNA-ligase_bac/mito"/>
</dbReference>
<dbReference type="InterPro" id="IPR000924">
    <property type="entry name" value="Glu/Gln-tRNA-synth"/>
</dbReference>
<dbReference type="InterPro" id="IPR020058">
    <property type="entry name" value="Glu/Gln-tRNA-synth_Ib_cat-dom"/>
</dbReference>
<dbReference type="InterPro" id="IPR049940">
    <property type="entry name" value="GluQ/Sye"/>
</dbReference>
<dbReference type="InterPro" id="IPR033910">
    <property type="entry name" value="GluRS_core"/>
</dbReference>
<dbReference type="InterPro" id="IPR014729">
    <property type="entry name" value="Rossmann-like_a/b/a_fold"/>
</dbReference>
<dbReference type="NCBIfam" id="TIGR00464">
    <property type="entry name" value="gltX_bact"/>
    <property type="match status" value="1"/>
</dbReference>
<dbReference type="PANTHER" id="PTHR43311">
    <property type="entry name" value="GLUTAMATE--TRNA LIGASE"/>
    <property type="match status" value="1"/>
</dbReference>
<dbReference type="PANTHER" id="PTHR43311:SF2">
    <property type="entry name" value="GLUTAMATE--TRNA LIGASE, MITOCHONDRIAL-RELATED"/>
    <property type="match status" value="1"/>
</dbReference>
<dbReference type="Pfam" id="PF19269">
    <property type="entry name" value="Anticodon_2"/>
    <property type="match status" value="1"/>
</dbReference>
<dbReference type="Pfam" id="PF00749">
    <property type="entry name" value="tRNA-synt_1c"/>
    <property type="match status" value="1"/>
</dbReference>
<dbReference type="PRINTS" id="PR00987">
    <property type="entry name" value="TRNASYNTHGLU"/>
</dbReference>
<dbReference type="SUPFAM" id="SSF48163">
    <property type="entry name" value="An anticodon-binding domain of class I aminoacyl-tRNA synthetases"/>
    <property type="match status" value="1"/>
</dbReference>
<dbReference type="SUPFAM" id="SSF52374">
    <property type="entry name" value="Nucleotidylyl transferase"/>
    <property type="match status" value="1"/>
</dbReference>
<dbReference type="PROSITE" id="PS00178">
    <property type="entry name" value="AA_TRNA_LIGASE_I"/>
    <property type="match status" value="1"/>
</dbReference>
<organism>
    <name type="scientific">Salmonella paratyphi A (strain AKU_12601)</name>
    <dbReference type="NCBI Taxonomy" id="554290"/>
    <lineage>
        <taxon>Bacteria</taxon>
        <taxon>Pseudomonadati</taxon>
        <taxon>Pseudomonadota</taxon>
        <taxon>Gammaproteobacteria</taxon>
        <taxon>Enterobacterales</taxon>
        <taxon>Enterobacteriaceae</taxon>
        <taxon>Salmonella</taxon>
    </lineage>
</organism>
<evidence type="ECO:0000255" key="1">
    <source>
        <dbReference type="HAMAP-Rule" id="MF_00022"/>
    </source>
</evidence>
<keyword id="KW-0030">Aminoacyl-tRNA synthetase</keyword>
<keyword id="KW-0067">ATP-binding</keyword>
<keyword id="KW-0963">Cytoplasm</keyword>
<keyword id="KW-0436">Ligase</keyword>
<keyword id="KW-0479">Metal-binding</keyword>
<keyword id="KW-0547">Nucleotide-binding</keyword>
<keyword id="KW-0648">Protein biosynthesis</keyword>
<keyword id="KW-0862">Zinc</keyword>
<name>SYE_SALPK</name>
<gene>
    <name evidence="1" type="primary">gltX</name>
    <name type="ordered locus">SSPA0415</name>
</gene>
<feature type="chain" id="PRO_1000090105" description="Glutamate--tRNA ligase">
    <location>
        <begin position="1"/>
        <end position="471"/>
    </location>
</feature>
<feature type="short sequence motif" description="'HIGH' region" evidence="1">
    <location>
        <begin position="9"/>
        <end position="19"/>
    </location>
</feature>
<feature type="short sequence motif" description="'KMSKS' region" evidence="1">
    <location>
        <begin position="237"/>
        <end position="241"/>
    </location>
</feature>
<feature type="binding site" evidence="1">
    <location>
        <position position="98"/>
    </location>
    <ligand>
        <name>Zn(2+)</name>
        <dbReference type="ChEBI" id="CHEBI:29105"/>
    </ligand>
</feature>
<feature type="binding site" evidence="1">
    <location>
        <position position="100"/>
    </location>
    <ligand>
        <name>Zn(2+)</name>
        <dbReference type="ChEBI" id="CHEBI:29105"/>
    </ligand>
</feature>
<feature type="binding site" evidence="1">
    <location>
        <position position="125"/>
    </location>
    <ligand>
        <name>Zn(2+)</name>
        <dbReference type="ChEBI" id="CHEBI:29105"/>
    </ligand>
</feature>
<feature type="binding site" evidence="1">
    <location>
        <position position="127"/>
    </location>
    <ligand>
        <name>Zn(2+)</name>
        <dbReference type="ChEBI" id="CHEBI:29105"/>
    </ligand>
</feature>
<feature type="binding site" evidence="1">
    <location>
        <position position="240"/>
    </location>
    <ligand>
        <name>ATP</name>
        <dbReference type="ChEBI" id="CHEBI:30616"/>
    </ligand>
</feature>
<protein>
    <recommendedName>
        <fullName evidence="1">Glutamate--tRNA ligase</fullName>
        <ecNumber evidence="1">6.1.1.17</ecNumber>
    </recommendedName>
    <alternativeName>
        <fullName evidence="1">Glutamyl-tRNA synthetase</fullName>
        <shortName evidence="1">GluRS</shortName>
    </alternativeName>
</protein>
<comment type="function">
    <text evidence="1">Catalyzes the attachment of glutamate to tRNA(Glu) in a two-step reaction: glutamate is first activated by ATP to form Glu-AMP and then transferred to the acceptor end of tRNA(Glu).</text>
</comment>
<comment type="catalytic activity">
    <reaction evidence="1">
        <text>tRNA(Glu) + L-glutamate + ATP = L-glutamyl-tRNA(Glu) + AMP + diphosphate</text>
        <dbReference type="Rhea" id="RHEA:23540"/>
        <dbReference type="Rhea" id="RHEA-COMP:9663"/>
        <dbReference type="Rhea" id="RHEA-COMP:9680"/>
        <dbReference type="ChEBI" id="CHEBI:29985"/>
        <dbReference type="ChEBI" id="CHEBI:30616"/>
        <dbReference type="ChEBI" id="CHEBI:33019"/>
        <dbReference type="ChEBI" id="CHEBI:78442"/>
        <dbReference type="ChEBI" id="CHEBI:78520"/>
        <dbReference type="ChEBI" id="CHEBI:456215"/>
        <dbReference type="EC" id="6.1.1.17"/>
    </reaction>
</comment>
<comment type="cofactor">
    <cofactor evidence="1">
        <name>Zn(2+)</name>
        <dbReference type="ChEBI" id="CHEBI:29105"/>
    </cofactor>
    <text evidence="1">Binds 1 zinc ion per subunit.</text>
</comment>
<comment type="subunit">
    <text evidence="1">Monomer.</text>
</comment>
<comment type="subcellular location">
    <subcellularLocation>
        <location evidence="1">Cytoplasm</location>
    </subcellularLocation>
</comment>
<comment type="similarity">
    <text evidence="1">Belongs to the class-I aminoacyl-tRNA synthetase family. Glutamate--tRNA ligase type 1 subfamily.</text>
</comment>
<reference key="1">
    <citation type="journal article" date="2009" name="BMC Genomics">
        <title>Pseudogene accumulation in the evolutionary histories of Salmonella enterica serovars Paratyphi A and Typhi.</title>
        <authorList>
            <person name="Holt K.E."/>
            <person name="Thomson N.R."/>
            <person name="Wain J."/>
            <person name="Langridge G.C."/>
            <person name="Hasan R."/>
            <person name="Bhutta Z.A."/>
            <person name="Quail M.A."/>
            <person name="Norbertczak H."/>
            <person name="Walker D."/>
            <person name="Simmonds M."/>
            <person name="White B."/>
            <person name="Bason N."/>
            <person name="Mungall K."/>
            <person name="Dougan G."/>
            <person name="Parkhill J."/>
        </authorList>
    </citation>
    <scope>NUCLEOTIDE SEQUENCE [LARGE SCALE GENOMIC DNA]</scope>
    <source>
        <strain>AKU_12601</strain>
    </source>
</reference>
<proteinExistence type="inferred from homology"/>
<accession>B5BB76</accession>